<keyword id="KW-0963">Cytoplasm</keyword>
<keyword id="KW-0328">Glycosyltransferase</keyword>
<keyword id="KW-0660">Purine salvage</keyword>
<keyword id="KW-1185">Reference proteome</keyword>
<keyword id="KW-0808">Transferase</keyword>
<accession>A0PZW4</accession>
<feature type="chain" id="PRO_1000000276" description="Adenine phosphoribosyltransferase">
    <location>
        <begin position="1"/>
        <end position="172"/>
    </location>
</feature>
<name>APT_CLONN</name>
<proteinExistence type="inferred from homology"/>
<reference key="1">
    <citation type="journal article" date="2006" name="Nat. Biotechnol.">
        <title>The genome and transcriptomes of the anti-tumor agent Clostridium novyi-NT.</title>
        <authorList>
            <person name="Bettegowda C."/>
            <person name="Huang X."/>
            <person name="Lin J."/>
            <person name="Cheong I."/>
            <person name="Kohli M."/>
            <person name="Szabo S.A."/>
            <person name="Zhang X."/>
            <person name="Diaz L.A. Jr."/>
            <person name="Velculescu V.E."/>
            <person name="Parmigiani G."/>
            <person name="Kinzler K.W."/>
            <person name="Vogelstein B."/>
            <person name="Zhou S."/>
        </authorList>
    </citation>
    <scope>NUCLEOTIDE SEQUENCE [LARGE SCALE GENOMIC DNA]</scope>
    <source>
        <strain>NT</strain>
    </source>
</reference>
<dbReference type="EC" id="2.4.2.7" evidence="1"/>
<dbReference type="EMBL" id="CP000382">
    <property type="protein sequence ID" value="ABK60675.1"/>
    <property type="molecule type" value="Genomic_DNA"/>
</dbReference>
<dbReference type="RefSeq" id="WP_011721920.1">
    <property type="nucleotide sequence ID" value="NC_008593.1"/>
</dbReference>
<dbReference type="SMR" id="A0PZW4"/>
<dbReference type="STRING" id="386415.NT01CX_1843"/>
<dbReference type="KEGG" id="cno:NT01CX_1843"/>
<dbReference type="eggNOG" id="COG0503">
    <property type="taxonomic scope" value="Bacteria"/>
</dbReference>
<dbReference type="HOGENOM" id="CLU_063339_3_0_9"/>
<dbReference type="UniPathway" id="UPA00588">
    <property type="reaction ID" value="UER00646"/>
</dbReference>
<dbReference type="Proteomes" id="UP000008220">
    <property type="component" value="Chromosome"/>
</dbReference>
<dbReference type="GO" id="GO:0005737">
    <property type="term" value="C:cytoplasm"/>
    <property type="evidence" value="ECO:0007669"/>
    <property type="project" value="UniProtKB-SubCell"/>
</dbReference>
<dbReference type="GO" id="GO:0002055">
    <property type="term" value="F:adenine binding"/>
    <property type="evidence" value="ECO:0007669"/>
    <property type="project" value="TreeGrafter"/>
</dbReference>
<dbReference type="GO" id="GO:0003999">
    <property type="term" value="F:adenine phosphoribosyltransferase activity"/>
    <property type="evidence" value="ECO:0007669"/>
    <property type="project" value="UniProtKB-UniRule"/>
</dbReference>
<dbReference type="GO" id="GO:0016208">
    <property type="term" value="F:AMP binding"/>
    <property type="evidence" value="ECO:0007669"/>
    <property type="project" value="TreeGrafter"/>
</dbReference>
<dbReference type="GO" id="GO:0006168">
    <property type="term" value="P:adenine salvage"/>
    <property type="evidence" value="ECO:0007669"/>
    <property type="project" value="InterPro"/>
</dbReference>
<dbReference type="GO" id="GO:0044209">
    <property type="term" value="P:AMP salvage"/>
    <property type="evidence" value="ECO:0007669"/>
    <property type="project" value="UniProtKB-UniRule"/>
</dbReference>
<dbReference type="GO" id="GO:0006166">
    <property type="term" value="P:purine ribonucleoside salvage"/>
    <property type="evidence" value="ECO:0007669"/>
    <property type="project" value="UniProtKB-KW"/>
</dbReference>
<dbReference type="CDD" id="cd06223">
    <property type="entry name" value="PRTases_typeI"/>
    <property type="match status" value="1"/>
</dbReference>
<dbReference type="FunFam" id="3.40.50.2020:FF:000004">
    <property type="entry name" value="Adenine phosphoribosyltransferase"/>
    <property type="match status" value="1"/>
</dbReference>
<dbReference type="Gene3D" id="3.40.50.2020">
    <property type="match status" value="1"/>
</dbReference>
<dbReference type="HAMAP" id="MF_00004">
    <property type="entry name" value="Aden_phosphoribosyltr"/>
    <property type="match status" value="1"/>
</dbReference>
<dbReference type="InterPro" id="IPR005764">
    <property type="entry name" value="Ade_phspho_trans"/>
</dbReference>
<dbReference type="InterPro" id="IPR000836">
    <property type="entry name" value="PRibTrfase_dom"/>
</dbReference>
<dbReference type="InterPro" id="IPR029057">
    <property type="entry name" value="PRTase-like"/>
</dbReference>
<dbReference type="InterPro" id="IPR050054">
    <property type="entry name" value="UPRTase/APRTase"/>
</dbReference>
<dbReference type="NCBIfam" id="TIGR01090">
    <property type="entry name" value="apt"/>
    <property type="match status" value="1"/>
</dbReference>
<dbReference type="NCBIfam" id="NF002633">
    <property type="entry name" value="PRK02304.1-2"/>
    <property type="match status" value="1"/>
</dbReference>
<dbReference type="NCBIfam" id="NF002634">
    <property type="entry name" value="PRK02304.1-3"/>
    <property type="match status" value="1"/>
</dbReference>
<dbReference type="NCBIfam" id="NF002636">
    <property type="entry name" value="PRK02304.1-5"/>
    <property type="match status" value="1"/>
</dbReference>
<dbReference type="PANTHER" id="PTHR32315">
    <property type="entry name" value="ADENINE PHOSPHORIBOSYLTRANSFERASE"/>
    <property type="match status" value="1"/>
</dbReference>
<dbReference type="PANTHER" id="PTHR32315:SF3">
    <property type="entry name" value="ADENINE PHOSPHORIBOSYLTRANSFERASE"/>
    <property type="match status" value="1"/>
</dbReference>
<dbReference type="Pfam" id="PF00156">
    <property type="entry name" value="Pribosyltran"/>
    <property type="match status" value="1"/>
</dbReference>
<dbReference type="SUPFAM" id="SSF53271">
    <property type="entry name" value="PRTase-like"/>
    <property type="match status" value="1"/>
</dbReference>
<gene>
    <name evidence="1" type="primary">apt</name>
    <name type="ordered locus">NT01CX_1843</name>
</gene>
<sequence length="172" mass="18950">MNLKEKIRVIEGFPKEGISFKDITTVLNDKEALKYTVDAIVEHLKDKNVDVVVGPEARGFLFGTPVAYALGAAFVPVRKKGKLPCETISSEYDLEYGSDVLQIHKDAIKKGQKVAIVDDLLATGGTMNSVIEMIEKLGGEVVSVDFLIELTDLKGREKIGNYDIMSLVQYDI</sequence>
<organism>
    <name type="scientific">Clostridium novyi (strain NT)</name>
    <dbReference type="NCBI Taxonomy" id="386415"/>
    <lineage>
        <taxon>Bacteria</taxon>
        <taxon>Bacillati</taxon>
        <taxon>Bacillota</taxon>
        <taxon>Clostridia</taxon>
        <taxon>Eubacteriales</taxon>
        <taxon>Clostridiaceae</taxon>
        <taxon>Clostridium</taxon>
    </lineage>
</organism>
<evidence type="ECO:0000255" key="1">
    <source>
        <dbReference type="HAMAP-Rule" id="MF_00004"/>
    </source>
</evidence>
<protein>
    <recommendedName>
        <fullName evidence="1">Adenine phosphoribosyltransferase</fullName>
        <shortName evidence="1">APRT</shortName>
        <ecNumber evidence="1">2.4.2.7</ecNumber>
    </recommendedName>
</protein>
<comment type="function">
    <text evidence="1">Catalyzes a salvage reaction resulting in the formation of AMP, that is energically less costly than de novo synthesis.</text>
</comment>
<comment type="catalytic activity">
    <reaction evidence="1">
        <text>AMP + diphosphate = 5-phospho-alpha-D-ribose 1-diphosphate + adenine</text>
        <dbReference type="Rhea" id="RHEA:16609"/>
        <dbReference type="ChEBI" id="CHEBI:16708"/>
        <dbReference type="ChEBI" id="CHEBI:33019"/>
        <dbReference type="ChEBI" id="CHEBI:58017"/>
        <dbReference type="ChEBI" id="CHEBI:456215"/>
        <dbReference type="EC" id="2.4.2.7"/>
    </reaction>
</comment>
<comment type="pathway">
    <text evidence="1">Purine metabolism; AMP biosynthesis via salvage pathway; AMP from adenine: step 1/1.</text>
</comment>
<comment type="subunit">
    <text evidence="1">Homodimer.</text>
</comment>
<comment type="subcellular location">
    <subcellularLocation>
        <location evidence="1">Cytoplasm</location>
    </subcellularLocation>
</comment>
<comment type="similarity">
    <text evidence="1">Belongs to the purine/pyrimidine phosphoribosyltransferase family.</text>
</comment>